<evidence type="ECO:0000250" key="1"/>
<evidence type="ECO:0000255" key="2">
    <source>
        <dbReference type="PROSITE-ProRule" id="PRU00191"/>
    </source>
</evidence>
<evidence type="ECO:0000255" key="3">
    <source>
        <dbReference type="PROSITE-ProRule" id="PRU00194"/>
    </source>
</evidence>
<evidence type="ECO:0000256" key="4">
    <source>
        <dbReference type="SAM" id="MobiDB-lite"/>
    </source>
</evidence>
<evidence type="ECO:0000305" key="5"/>
<name>SOCS4_MOUSE</name>
<protein>
    <recommendedName>
        <fullName>Suppressor of cytokine signaling 4</fullName>
        <shortName>SOCS-4</shortName>
    </recommendedName>
    <alternativeName>
        <fullName>Suppressor of cytokine signaling 7</fullName>
        <shortName>SOCS-7</shortName>
    </alternativeName>
</protein>
<sequence length="436" mass="49918">MAENNSKNVDVRPKTSRSRSADRKDGYVWSGKKLSWSKKSESCSESEAIGTVENVEIPLRSQERQLSCSSIELDLDHSCGHRFLGRSLKQKLQDAVGQCFPIKNCSGRHSPGLPSKRKIHISELMLDKCPFPPRSDLAFRWHFIKRHTVPMSPNSDEWVSADLSERKLRDAQLKRRNTEDDIPCFSHTNGQPCVITANSASCTGGHITGSMMNLVTNNSIEDSDMDSEDEIITLCTSSRKRNKPRWEMEEEILQLEAPPKFHTQIDYVHCLVPDLLQISNNPCYWGVMDKYAAEALLEGKPEGTFLLRDSAQEDYLFSVSFRRYSRSLHARIEQWNHNFSFDAHDPCVFHSPDITGLLEHYKDPSACMFFEPLLSTPLIRTFPFSLQHICRTVICNCTTYDGIDALPIPSPMKLYLKEYHYKSKVRLLRIDVPEQQ</sequence>
<gene>
    <name type="primary">Socs4</name>
    <name type="synonym">Socs7</name>
</gene>
<organism>
    <name type="scientific">Mus musculus</name>
    <name type="common">Mouse</name>
    <dbReference type="NCBI Taxonomy" id="10090"/>
    <lineage>
        <taxon>Eukaryota</taxon>
        <taxon>Metazoa</taxon>
        <taxon>Chordata</taxon>
        <taxon>Craniata</taxon>
        <taxon>Vertebrata</taxon>
        <taxon>Euteleostomi</taxon>
        <taxon>Mammalia</taxon>
        <taxon>Eutheria</taxon>
        <taxon>Euarchontoglires</taxon>
        <taxon>Glires</taxon>
        <taxon>Rodentia</taxon>
        <taxon>Myomorpha</taxon>
        <taxon>Muroidea</taxon>
        <taxon>Muridae</taxon>
        <taxon>Murinae</taxon>
        <taxon>Mus</taxon>
        <taxon>Mus</taxon>
    </lineage>
</organism>
<reference key="1">
    <citation type="submission" date="2001-07" db="EMBL/GenBank/DDBJ databases">
        <authorList>
            <person name="Hilton D.J."/>
        </authorList>
    </citation>
    <scope>NUCLEOTIDE SEQUENCE [MRNA]</scope>
</reference>
<reference key="2">
    <citation type="submission" date="2005-07" db="EMBL/GenBank/DDBJ databases">
        <authorList>
            <person name="Mural R.J."/>
            <person name="Adams M.D."/>
            <person name="Myers E.W."/>
            <person name="Smith H.O."/>
            <person name="Venter J.C."/>
        </authorList>
    </citation>
    <scope>NUCLEOTIDE SEQUENCE [LARGE SCALE GENOMIC DNA]</scope>
</reference>
<reference key="3">
    <citation type="journal article" date="2004" name="Genome Res.">
        <title>The status, quality, and expansion of the NIH full-length cDNA project: the Mammalian Gene Collection (MGC).</title>
        <authorList>
            <consortium name="The MGC Project Team"/>
        </authorList>
    </citation>
    <scope>NUCLEOTIDE SEQUENCE [LARGE SCALE MRNA]</scope>
</reference>
<dbReference type="EMBL" id="AY046322">
    <property type="protein sequence ID" value="AAL03942.1"/>
    <property type="molecule type" value="mRNA"/>
</dbReference>
<dbReference type="EMBL" id="CH466605">
    <property type="protein sequence ID" value="EDL20739.1"/>
    <property type="molecule type" value="Genomic_DNA"/>
</dbReference>
<dbReference type="EMBL" id="BC117814">
    <property type="protein sequence ID" value="AAI17815.1"/>
    <property type="molecule type" value="mRNA"/>
</dbReference>
<dbReference type="EMBL" id="BC117815">
    <property type="protein sequence ID" value="AAI17816.1"/>
    <property type="molecule type" value="mRNA"/>
</dbReference>
<dbReference type="CCDS" id="CCDS26985.1"/>
<dbReference type="RefSeq" id="NP_543119.2">
    <property type="nucleotide sequence ID" value="NM_080843.2"/>
</dbReference>
<dbReference type="SMR" id="Q91ZA6"/>
<dbReference type="BioGRID" id="212083">
    <property type="interactions" value="5"/>
</dbReference>
<dbReference type="FunCoup" id="Q91ZA6">
    <property type="interactions" value="1243"/>
</dbReference>
<dbReference type="STRING" id="10090.ENSMUSP00000066031"/>
<dbReference type="iPTMnet" id="Q91ZA6"/>
<dbReference type="PhosphoSitePlus" id="Q91ZA6"/>
<dbReference type="PaxDb" id="10090-ENSMUSP00000066031"/>
<dbReference type="ProteomicsDB" id="261546"/>
<dbReference type="Antibodypedia" id="4604">
    <property type="antibodies" value="294 antibodies from 33 providers"/>
</dbReference>
<dbReference type="DNASU" id="67296"/>
<dbReference type="Ensembl" id="ENSMUST00000065562.6">
    <property type="protein sequence ID" value="ENSMUSP00000066031.5"/>
    <property type="gene ID" value="ENSMUSG00000048379.10"/>
</dbReference>
<dbReference type="GeneID" id="67296"/>
<dbReference type="KEGG" id="mmu:67296"/>
<dbReference type="UCSC" id="uc007thx.1">
    <property type="organism name" value="mouse"/>
</dbReference>
<dbReference type="AGR" id="MGI:1914546"/>
<dbReference type="CTD" id="122809"/>
<dbReference type="MGI" id="MGI:1914546">
    <property type="gene designation" value="Socs4"/>
</dbReference>
<dbReference type="VEuPathDB" id="HostDB:ENSMUSG00000048379"/>
<dbReference type="eggNOG" id="KOG4566">
    <property type="taxonomic scope" value="Eukaryota"/>
</dbReference>
<dbReference type="GeneTree" id="ENSGT00940000161456"/>
<dbReference type="HOGENOM" id="CLU_035609_0_0_1"/>
<dbReference type="InParanoid" id="Q91ZA6"/>
<dbReference type="OMA" id="RINNNPC"/>
<dbReference type="OrthoDB" id="8820570at2759"/>
<dbReference type="PhylomeDB" id="Q91ZA6"/>
<dbReference type="TreeFam" id="TF321368"/>
<dbReference type="UniPathway" id="UPA00143"/>
<dbReference type="BioGRID-ORCS" id="67296">
    <property type="hits" value="4 hits in 77 CRISPR screens"/>
</dbReference>
<dbReference type="ChiTaRS" id="Socs4">
    <property type="organism name" value="mouse"/>
</dbReference>
<dbReference type="PRO" id="PR:Q91ZA6"/>
<dbReference type="Proteomes" id="UP000000589">
    <property type="component" value="Chromosome 14"/>
</dbReference>
<dbReference type="RNAct" id="Q91ZA6">
    <property type="molecule type" value="protein"/>
</dbReference>
<dbReference type="Bgee" id="ENSMUSG00000048379">
    <property type="expression patterns" value="Expressed in humerus cartilage element and 238 other cell types or tissues"/>
</dbReference>
<dbReference type="ExpressionAtlas" id="Q91ZA6">
    <property type="expression patterns" value="baseline and differential"/>
</dbReference>
<dbReference type="GO" id="GO:0005829">
    <property type="term" value="C:cytosol"/>
    <property type="evidence" value="ECO:0000304"/>
    <property type="project" value="Reactome"/>
</dbReference>
<dbReference type="GO" id="GO:0035556">
    <property type="term" value="P:intracellular signal transduction"/>
    <property type="evidence" value="ECO:0007669"/>
    <property type="project" value="InterPro"/>
</dbReference>
<dbReference type="GO" id="GO:0007175">
    <property type="term" value="P:negative regulation of epidermal growth factor-activated receptor activity"/>
    <property type="evidence" value="ECO:0000250"/>
    <property type="project" value="UniProtKB"/>
</dbReference>
<dbReference type="GO" id="GO:0032436">
    <property type="term" value="P:positive regulation of proteasomal ubiquitin-dependent protein catabolic process"/>
    <property type="evidence" value="ECO:0000250"/>
    <property type="project" value="UniProtKB"/>
</dbReference>
<dbReference type="GO" id="GO:0016567">
    <property type="term" value="P:protein ubiquitination"/>
    <property type="evidence" value="ECO:0007669"/>
    <property type="project" value="UniProtKB-UniPathway"/>
</dbReference>
<dbReference type="CDD" id="cd10385">
    <property type="entry name" value="SH2_SOCS4"/>
    <property type="match status" value="1"/>
</dbReference>
<dbReference type="CDD" id="cd03738">
    <property type="entry name" value="SOCS_SOCS4"/>
    <property type="match status" value="1"/>
</dbReference>
<dbReference type="FunFam" id="1.10.750.20:FF:000002">
    <property type="entry name" value="Suppressor of cytokine signaling 2"/>
    <property type="match status" value="1"/>
</dbReference>
<dbReference type="FunFam" id="3.30.505.10:FF:000028">
    <property type="entry name" value="Suppressor of cytokine signaling 5"/>
    <property type="match status" value="1"/>
</dbReference>
<dbReference type="Gene3D" id="3.30.505.10">
    <property type="entry name" value="SH2 domain"/>
    <property type="match status" value="1"/>
</dbReference>
<dbReference type="InterPro" id="IPR000980">
    <property type="entry name" value="SH2"/>
</dbReference>
<dbReference type="InterPro" id="IPR036860">
    <property type="entry name" value="SH2_dom_sf"/>
</dbReference>
<dbReference type="InterPro" id="IPR022252">
    <property type="entry name" value="SOCS4/SOCS5_dom"/>
</dbReference>
<dbReference type="InterPro" id="IPR035864">
    <property type="entry name" value="SOCS4_SH2"/>
</dbReference>
<dbReference type="InterPro" id="IPR037342">
    <property type="entry name" value="SOCS4_SOCS"/>
</dbReference>
<dbReference type="InterPro" id="IPR001496">
    <property type="entry name" value="SOCS_box"/>
</dbReference>
<dbReference type="InterPro" id="IPR036036">
    <property type="entry name" value="SOCS_box-like_dom_sf"/>
</dbReference>
<dbReference type="PANTHER" id="PTHR10155">
    <property type="entry name" value="PHOSPHATIDYLINOSITOL 3-KINASE REGULATORY SUBUNIT"/>
    <property type="match status" value="1"/>
</dbReference>
<dbReference type="PANTHER" id="PTHR10155:SF21">
    <property type="entry name" value="SUPPRESSOR OF CYTOKINE SIGNALING 4"/>
    <property type="match status" value="1"/>
</dbReference>
<dbReference type="Pfam" id="PF00017">
    <property type="entry name" value="SH2"/>
    <property type="match status" value="1"/>
</dbReference>
<dbReference type="Pfam" id="PF12610">
    <property type="entry name" value="SOCS"/>
    <property type="match status" value="1"/>
</dbReference>
<dbReference type="Pfam" id="PF07525">
    <property type="entry name" value="SOCS_box"/>
    <property type="match status" value="1"/>
</dbReference>
<dbReference type="SMART" id="SM00252">
    <property type="entry name" value="SH2"/>
    <property type="match status" value="1"/>
</dbReference>
<dbReference type="SMART" id="SM00253">
    <property type="entry name" value="SOCS"/>
    <property type="match status" value="1"/>
</dbReference>
<dbReference type="SMART" id="SM00969">
    <property type="entry name" value="SOCS_box"/>
    <property type="match status" value="1"/>
</dbReference>
<dbReference type="SUPFAM" id="SSF55550">
    <property type="entry name" value="SH2 domain"/>
    <property type="match status" value="1"/>
</dbReference>
<dbReference type="SUPFAM" id="SSF158235">
    <property type="entry name" value="SOCS box-like"/>
    <property type="match status" value="1"/>
</dbReference>
<dbReference type="PROSITE" id="PS50001">
    <property type="entry name" value="SH2"/>
    <property type="match status" value="1"/>
</dbReference>
<dbReference type="PROSITE" id="PS50225">
    <property type="entry name" value="SOCS"/>
    <property type="match status" value="1"/>
</dbReference>
<keyword id="KW-0341">Growth regulation</keyword>
<keyword id="KW-1185">Reference proteome</keyword>
<keyword id="KW-0727">SH2 domain</keyword>
<keyword id="KW-0734">Signal transduction inhibitor</keyword>
<keyword id="KW-0833">Ubl conjugation pathway</keyword>
<proteinExistence type="evidence at transcript level"/>
<accession>Q91ZA6</accession>
<accession>Q149F7</accession>
<accession>Q149F8</accession>
<feature type="chain" id="PRO_0000181248" description="Suppressor of cytokine signaling 4">
    <location>
        <begin position="1"/>
        <end position="436"/>
    </location>
</feature>
<feature type="domain" description="SH2" evidence="2">
    <location>
        <begin position="283"/>
        <end position="378"/>
    </location>
</feature>
<feature type="domain" description="SOCS box" evidence="3">
    <location>
        <begin position="373"/>
        <end position="422"/>
    </location>
</feature>
<feature type="region of interest" description="Disordered" evidence="4">
    <location>
        <begin position="1"/>
        <end position="25"/>
    </location>
</feature>
<feature type="compositionally biased region" description="Basic and acidic residues" evidence="4">
    <location>
        <begin position="9"/>
        <end position="25"/>
    </location>
</feature>
<feature type="sequence conflict" description="In Ref. 1; AAL03942 and 3; AAI17815." evidence="5" ref="1 3">
    <original>R</original>
    <variation>W</variation>
    <location>
        <position position="12"/>
    </location>
</feature>
<comment type="function">
    <text evidence="1">SOCS family proteins form part of a classical negative feedback system that regulates cytokine signal transduction. Substrate-recognition component of a SCF-like ECS (Elongin BC-CUL2/5-SOCS-box protein) E3 ubiquitin-protein ligase complex which mediates the ubiquitination and subsequent proteasomal degradation of target proteins. Inhibits EGF signaling by mediating the degradation of the Tyr-phosphorylated EGF receptor/EGFR (By similarity).</text>
</comment>
<comment type="pathway">
    <text>Protein modification; protein ubiquitination.</text>
</comment>
<comment type="domain">
    <text evidence="1">The SOCS box domain mediates the interaction with the Elongin BC complex, an adapter module in different E3 ubiquitin ligase complexes.</text>
</comment>